<reference key="1">
    <citation type="journal article" date="2008" name="J. Bacteriol.">
        <title>The pangenome structure of Escherichia coli: comparative genomic analysis of E. coli commensal and pathogenic isolates.</title>
        <authorList>
            <person name="Rasko D.A."/>
            <person name="Rosovitz M.J."/>
            <person name="Myers G.S.A."/>
            <person name="Mongodin E.F."/>
            <person name="Fricke W.F."/>
            <person name="Gajer P."/>
            <person name="Crabtree J."/>
            <person name="Sebaihia M."/>
            <person name="Thomson N.R."/>
            <person name="Chaudhuri R."/>
            <person name="Henderson I.R."/>
            <person name="Sperandio V."/>
            <person name="Ravel J."/>
        </authorList>
    </citation>
    <scope>NUCLEOTIDE SEQUENCE [LARGE SCALE GENOMIC DNA]</scope>
    <source>
        <strain>HS</strain>
    </source>
</reference>
<protein>
    <recommendedName>
        <fullName>Autoinducer 2 import system permease protein LsrD</fullName>
        <shortName>AI-2 import system permease protein LsrD</shortName>
    </recommendedName>
</protein>
<accession>A8A068</accession>
<proteinExistence type="inferred from homology"/>
<comment type="function">
    <text evidence="1">Part of the ABC transporter complex LsrABCD involved in autoinducer 2 (AI-2) import. Probably responsible for the translocation of the substrate across the membrane (By similarity).</text>
</comment>
<comment type="subunit">
    <text evidence="1">The complex is composed of two ATP-binding proteins (LsrA), two transmembrane proteins (LsrC and LsrD) and a solute-binding protein (LsrB).</text>
</comment>
<comment type="subcellular location">
    <subcellularLocation>
        <location evidence="1">Cell inner membrane</location>
        <topology evidence="1">Multi-pass membrane protein</topology>
    </subcellularLocation>
</comment>
<comment type="similarity">
    <text evidence="3">Belongs to the binding-protein-dependent transport system permease family. AraH/RbsC subfamily.</text>
</comment>
<feature type="chain" id="PRO_0000351368" description="Autoinducer 2 import system permease protein LsrD">
    <location>
        <begin position="1"/>
        <end position="330"/>
    </location>
</feature>
<feature type="topological domain" description="Cytoplasmic" evidence="2">
    <location>
        <begin position="1"/>
        <end position="4"/>
    </location>
</feature>
<feature type="transmembrane region" description="Helical" evidence="2">
    <location>
        <begin position="5"/>
        <end position="25"/>
    </location>
</feature>
<feature type="topological domain" description="Periplasmic" evidence="2">
    <location>
        <begin position="26"/>
        <end position="42"/>
    </location>
</feature>
<feature type="transmembrane region" description="Helical" evidence="2">
    <location>
        <begin position="43"/>
        <end position="63"/>
    </location>
</feature>
<feature type="topological domain" description="Cytoplasmic" evidence="2">
    <location>
        <begin position="64"/>
        <end position="67"/>
    </location>
</feature>
<feature type="transmembrane region" description="Helical" evidence="2">
    <location>
        <begin position="68"/>
        <end position="88"/>
    </location>
</feature>
<feature type="transmembrane region" description="Helical" evidence="2">
    <location>
        <begin position="89"/>
        <end position="109"/>
    </location>
</feature>
<feature type="topological domain" description="Cytoplasmic" evidence="2">
    <location>
        <begin position="110"/>
        <end position="115"/>
    </location>
</feature>
<feature type="transmembrane region" description="Helical" evidence="2">
    <location>
        <begin position="116"/>
        <end position="136"/>
    </location>
</feature>
<feature type="topological domain" description="Periplasmic" evidence="2">
    <location>
        <begin position="137"/>
        <end position="159"/>
    </location>
</feature>
<feature type="transmembrane region" description="Helical" evidence="2">
    <location>
        <begin position="160"/>
        <end position="180"/>
    </location>
</feature>
<feature type="topological domain" description="Cytoplasmic" evidence="2">
    <location>
        <begin position="181"/>
        <end position="209"/>
    </location>
</feature>
<feature type="transmembrane region" description="Helical" evidence="2">
    <location>
        <begin position="210"/>
        <end position="230"/>
    </location>
</feature>
<feature type="topological domain" description="Periplasmic" evidence="2">
    <location>
        <begin position="231"/>
        <end position="237"/>
    </location>
</feature>
<feature type="transmembrane region" description="Helical" evidence="2">
    <location>
        <begin position="238"/>
        <end position="258"/>
    </location>
</feature>
<feature type="transmembrane region" description="Helical" evidence="2">
    <location>
        <begin position="259"/>
        <end position="279"/>
    </location>
</feature>
<feature type="topological domain" description="Periplasmic" evidence="2">
    <location>
        <begin position="280"/>
        <end position="285"/>
    </location>
</feature>
<feature type="transmembrane region" description="Helical" evidence="2">
    <location>
        <begin position="286"/>
        <end position="306"/>
    </location>
</feature>
<feature type="topological domain" description="Cytoplasmic" evidence="2">
    <location>
        <begin position="307"/>
        <end position="330"/>
    </location>
</feature>
<keyword id="KW-0997">Cell inner membrane</keyword>
<keyword id="KW-1003">Cell membrane</keyword>
<keyword id="KW-0472">Membrane</keyword>
<keyword id="KW-0812">Transmembrane</keyword>
<keyword id="KW-1133">Transmembrane helix</keyword>
<keyword id="KW-0813">Transport</keyword>
<organism>
    <name type="scientific">Escherichia coli O9:H4 (strain HS)</name>
    <dbReference type="NCBI Taxonomy" id="331112"/>
    <lineage>
        <taxon>Bacteria</taxon>
        <taxon>Pseudomonadati</taxon>
        <taxon>Pseudomonadota</taxon>
        <taxon>Gammaproteobacteria</taxon>
        <taxon>Enterobacterales</taxon>
        <taxon>Enterobacteriaceae</taxon>
        <taxon>Escherichia</taxon>
    </lineage>
</organism>
<name>LSRD_ECOHS</name>
<evidence type="ECO:0000250" key="1"/>
<evidence type="ECO:0000255" key="2"/>
<evidence type="ECO:0000305" key="3"/>
<gene>
    <name type="primary">lsrD</name>
    <name type="ordered locus">EcHS_A1597</name>
</gene>
<sequence>MRIRYGWELALAALLVIEIVAFGAINPRMLDLNMLLFSTSDFICIGIVALPLTMVIVSGGIDISFGSTIGLCAIALGVLFQSGVPMPLAILLTLLLGALCGLINAGLIIYTKVNPLVITLGTLYLFAGSALLLSGMAGATGYEGIGGFPMAFTDFANLDVLGLPVPLIIFLICLLVFWLWLHKTHAGRNVFLIGQSPRVALYSAIPVNRTLCALYAMTGLASAVAAVLLVSYFGSARSDLGASFLMPAITAVVLGGANIYGGSGSIIGTAIAVLLVGYLQQGLQMAGVPNQVSSALSGALLIVVVVGRSVSLHRQQIKEWLARRANNPLP</sequence>
<dbReference type="EMBL" id="CP000802">
    <property type="protein sequence ID" value="ABV05922.1"/>
    <property type="molecule type" value="Genomic_DNA"/>
</dbReference>
<dbReference type="RefSeq" id="WP_001222721.1">
    <property type="nucleotide sequence ID" value="NC_009800.1"/>
</dbReference>
<dbReference type="GeneID" id="75202157"/>
<dbReference type="KEGG" id="ecx:EcHS_A1597"/>
<dbReference type="HOGENOM" id="CLU_028880_0_0_6"/>
<dbReference type="GO" id="GO:0005886">
    <property type="term" value="C:plasma membrane"/>
    <property type="evidence" value="ECO:0007669"/>
    <property type="project" value="UniProtKB-SubCell"/>
</dbReference>
<dbReference type="GO" id="GO:0022857">
    <property type="term" value="F:transmembrane transporter activity"/>
    <property type="evidence" value="ECO:0007669"/>
    <property type="project" value="InterPro"/>
</dbReference>
<dbReference type="CDD" id="cd06579">
    <property type="entry name" value="TM_PBP1_transp_AraH_like"/>
    <property type="match status" value="1"/>
</dbReference>
<dbReference type="InterPro" id="IPR001851">
    <property type="entry name" value="ABC_transp_permease"/>
</dbReference>
<dbReference type="NCBIfam" id="NF011612">
    <property type="entry name" value="PRK15038.1"/>
    <property type="match status" value="1"/>
</dbReference>
<dbReference type="PANTHER" id="PTHR32196">
    <property type="entry name" value="ABC TRANSPORTER PERMEASE PROTEIN YPHD-RELATED-RELATED"/>
    <property type="match status" value="1"/>
</dbReference>
<dbReference type="PANTHER" id="PTHR32196:SF71">
    <property type="entry name" value="AUTOINDUCER 2 IMPORT SYSTEM PERMEASE PROTEIN LSRD"/>
    <property type="match status" value="1"/>
</dbReference>
<dbReference type="Pfam" id="PF02653">
    <property type="entry name" value="BPD_transp_2"/>
    <property type="match status" value="1"/>
</dbReference>